<name>THIK_ECODH</name>
<sequence>MPFRSNNPITRDELLSRFFPQYHPVTTFNSGLSGGSFLIEHQGQRFVVRQPHDPDAPQSAFLRQYRALSQLPACIAPKPHLYLRDWMVVDYLPGAVKTYLPDTNELAGLLYYLHQQPRFGWRITLLPLLELYWQQSDPARRTVGWLRMLKRLRKAREPRPLRLSPLHMDVHAGNLVHSASGLKLIDWEYAGDGDIALELAAVWVENTEQHRQLVNDYATRAKIYPAQLWRQVRRWFPWLLMLKAGWFEYRWRQTGDQQFIRLADDTWRQLLIKQ</sequence>
<evidence type="ECO:0000255" key="1">
    <source>
        <dbReference type="HAMAP-Rule" id="MF_01604"/>
    </source>
</evidence>
<dbReference type="EC" id="2.7.1.89" evidence="1"/>
<dbReference type="EMBL" id="CP000948">
    <property type="protein sequence ID" value="ACB02299.1"/>
    <property type="molecule type" value="Genomic_DNA"/>
</dbReference>
<dbReference type="RefSeq" id="WP_001116592.1">
    <property type="nucleotide sequence ID" value="NC_010473.1"/>
</dbReference>
<dbReference type="SMR" id="B1XA16"/>
<dbReference type="GeneID" id="75203692"/>
<dbReference type="KEGG" id="ecd:ECDH10B_1178"/>
<dbReference type="HOGENOM" id="CLU_055115_2_1_6"/>
<dbReference type="UniPathway" id="UPA00060">
    <property type="reaction ID" value="UER00596"/>
</dbReference>
<dbReference type="GO" id="GO:0005524">
    <property type="term" value="F:ATP binding"/>
    <property type="evidence" value="ECO:0007669"/>
    <property type="project" value="UniProtKB-KW"/>
</dbReference>
<dbReference type="GO" id="GO:0019165">
    <property type="term" value="F:thiamine kinase activity"/>
    <property type="evidence" value="ECO:0007669"/>
    <property type="project" value="UniProtKB-UniRule"/>
</dbReference>
<dbReference type="GO" id="GO:0009229">
    <property type="term" value="P:thiamine diphosphate biosynthetic process"/>
    <property type="evidence" value="ECO:0007669"/>
    <property type="project" value="UniProtKB-UniRule"/>
</dbReference>
<dbReference type="GO" id="GO:0006772">
    <property type="term" value="P:thiamine metabolic process"/>
    <property type="evidence" value="ECO:0007669"/>
    <property type="project" value="InterPro"/>
</dbReference>
<dbReference type="FunFam" id="3.90.1200.10:FF:000004">
    <property type="entry name" value="Thiamine kinase"/>
    <property type="match status" value="1"/>
</dbReference>
<dbReference type="Gene3D" id="3.90.1200.10">
    <property type="match status" value="1"/>
</dbReference>
<dbReference type="HAMAP" id="MF_01604">
    <property type="entry name" value="Thiamine_kinase"/>
    <property type="match status" value="1"/>
</dbReference>
<dbReference type="InterPro" id="IPR002575">
    <property type="entry name" value="Aminoglycoside_PTrfase"/>
</dbReference>
<dbReference type="InterPro" id="IPR011009">
    <property type="entry name" value="Kinase-like_dom_sf"/>
</dbReference>
<dbReference type="InterPro" id="IPR014093">
    <property type="entry name" value="Thiamine_kinase"/>
</dbReference>
<dbReference type="NCBIfam" id="NF007620">
    <property type="entry name" value="PRK10271.1"/>
    <property type="match status" value="1"/>
</dbReference>
<dbReference type="NCBIfam" id="TIGR02721">
    <property type="entry name" value="ycfN_thiK"/>
    <property type="match status" value="1"/>
</dbReference>
<dbReference type="Pfam" id="PF01636">
    <property type="entry name" value="APH"/>
    <property type="match status" value="1"/>
</dbReference>
<dbReference type="SUPFAM" id="SSF56112">
    <property type="entry name" value="Protein kinase-like (PK-like)"/>
    <property type="match status" value="1"/>
</dbReference>
<feature type="chain" id="PRO_1000198088" description="Thiamine kinase">
    <location>
        <begin position="1"/>
        <end position="274"/>
    </location>
</feature>
<comment type="function">
    <text evidence="1">Catalyzes the ATP-dependent phosphorylation of thiamine to thiamine phosphate. Is involved in thiamine salvage.</text>
</comment>
<comment type="catalytic activity">
    <reaction evidence="1">
        <text>thiamine + ATP = thiamine phosphate + ADP + H(+)</text>
        <dbReference type="Rhea" id="RHEA:12012"/>
        <dbReference type="ChEBI" id="CHEBI:15378"/>
        <dbReference type="ChEBI" id="CHEBI:18385"/>
        <dbReference type="ChEBI" id="CHEBI:30616"/>
        <dbReference type="ChEBI" id="CHEBI:37575"/>
        <dbReference type="ChEBI" id="CHEBI:456216"/>
        <dbReference type="EC" id="2.7.1.89"/>
    </reaction>
    <physiologicalReaction direction="left-to-right" evidence="1">
        <dbReference type="Rhea" id="RHEA:12013"/>
    </physiologicalReaction>
</comment>
<comment type="pathway">
    <text evidence="1">Cofactor biosynthesis; thiamine diphosphate biosynthesis; thiamine phosphate from thiamine: step 1/1.</text>
</comment>
<comment type="similarity">
    <text evidence="1">Belongs to the thiamine kinase family.</text>
</comment>
<protein>
    <recommendedName>
        <fullName evidence="1">Thiamine kinase</fullName>
        <ecNumber evidence="1">2.7.1.89</ecNumber>
    </recommendedName>
</protein>
<keyword id="KW-0067">ATP-binding</keyword>
<keyword id="KW-0418">Kinase</keyword>
<keyword id="KW-0547">Nucleotide-binding</keyword>
<keyword id="KW-0808">Transferase</keyword>
<organism>
    <name type="scientific">Escherichia coli (strain K12 / DH10B)</name>
    <dbReference type="NCBI Taxonomy" id="316385"/>
    <lineage>
        <taxon>Bacteria</taxon>
        <taxon>Pseudomonadati</taxon>
        <taxon>Pseudomonadota</taxon>
        <taxon>Gammaproteobacteria</taxon>
        <taxon>Enterobacterales</taxon>
        <taxon>Enterobacteriaceae</taxon>
        <taxon>Escherichia</taxon>
    </lineage>
</organism>
<proteinExistence type="inferred from homology"/>
<accession>B1XA16</accession>
<reference key="1">
    <citation type="journal article" date="2008" name="J. Bacteriol.">
        <title>The complete genome sequence of Escherichia coli DH10B: insights into the biology of a laboratory workhorse.</title>
        <authorList>
            <person name="Durfee T."/>
            <person name="Nelson R."/>
            <person name="Baldwin S."/>
            <person name="Plunkett G. III"/>
            <person name="Burland V."/>
            <person name="Mau B."/>
            <person name="Petrosino J.F."/>
            <person name="Qin X."/>
            <person name="Muzny D.M."/>
            <person name="Ayele M."/>
            <person name="Gibbs R.A."/>
            <person name="Csorgo B."/>
            <person name="Posfai G."/>
            <person name="Weinstock G.M."/>
            <person name="Blattner F.R."/>
        </authorList>
    </citation>
    <scope>NUCLEOTIDE SEQUENCE [LARGE SCALE GENOMIC DNA]</scope>
    <source>
        <strain>K12 / DH10B</strain>
    </source>
</reference>
<gene>
    <name evidence="1" type="primary">thiK</name>
    <name type="ordered locus">ECDH10B_1178</name>
</gene>